<feature type="chain" id="PRO_1000077111" description="5-methyltetrahydropteroyltriglutamate--homocysteine methyltransferase">
    <location>
        <begin position="1"/>
        <end position="775"/>
    </location>
</feature>
<feature type="active site" description="Proton donor" evidence="1">
    <location>
        <position position="698"/>
    </location>
</feature>
<feature type="binding site" evidence="1">
    <location>
        <begin position="16"/>
        <end position="19"/>
    </location>
    <ligand>
        <name>5-methyltetrahydropteroyltri-L-glutamate</name>
        <dbReference type="ChEBI" id="CHEBI:58207"/>
    </ligand>
</feature>
<feature type="binding site" evidence="1">
    <location>
        <position position="115"/>
    </location>
    <ligand>
        <name>5-methyltetrahydropteroyltri-L-glutamate</name>
        <dbReference type="ChEBI" id="CHEBI:58207"/>
    </ligand>
</feature>
<feature type="binding site" evidence="1">
    <location>
        <begin position="435"/>
        <end position="437"/>
    </location>
    <ligand>
        <name>L-homocysteine</name>
        <dbReference type="ChEBI" id="CHEBI:58199"/>
    </ligand>
</feature>
<feature type="binding site" evidence="1">
    <location>
        <begin position="435"/>
        <end position="437"/>
    </location>
    <ligand>
        <name>L-methionine</name>
        <dbReference type="ChEBI" id="CHEBI:57844"/>
    </ligand>
</feature>
<feature type="binding site" evidence="1">
    <location>
        <position position="488"/>
    </location>
    <ligand>
        <name>L-homocysteine</name>
        <dbReference type="ChEBI" id="CHEBI:58199"/>
    </ligand>
</feature>
<feature type="binding site" evidence="1">
    <location>
        <position position="488"/>
    </location>
    <ligand>
        <name>L-methionine</name>
        <dbReference type="ChEBI" id="CHEBI:57844"/>
    </ligand>
</feature>
<feature type="binding site" evidence="1">
    <location>
        <begin position="519"/>
        <end position="520"/>
    </location>
    <ligand>
        <name>5-methyltetrahydropteroyltri-L-glutamate</name>
        <dbReference type="ChEBI" id="CHEBI:58207"/>
    </ligand>
</feature>
<feature type="binding site" evidence="1">
    <location>
        <position position="565"/>
    </location>
    <ligand>
        <name>5-methyltetrahydropteroyltri-L-glutamate</name>
        <dbReference type="ChEBI" id="CHEBI:58207"/>
    </ligand>
</feature>
<feature type="binding site" evidence="1">
    <location>
        <position position="603"/>
    </location>
    <ligand>
        <name>L-homocysteine</name>
        <dbReference type="ChEBI" id="CHEBI:58199"/>
    </ligand>
</feature>
<feature type="binding site" evidence="1">
    <location>
        <position position="603"/>
    </location>
    <ligand>
        <name>L-methionine</name>
        <dbReference type="ChEBI" id="CHEBI:57844"/>
    </ligand>
</feature>
<feature type="binding site" evidence="1">
    <location>
        <position position="609"/>
    </location>
    <ligand>
        <name>5-methyltetrahydropteroyltri-L-glutamate</name>
        <dbReference type="ChEBI" id="CHEBI:58207"/>
    </ligand>
</feature>
<feature type="binding site" evidence="1">
    <location>
        <position position="645"/>
    </location>
    <ligand>
        <name>Zn(2+)</name>
        <dbReference type="ChEBI" id="CHEBI:29105"/>
        <note>catalytic</note>
    </ligand>
</feature>
<feature type="binding site" evidence="1">
    <location>
        <position position="647"/>
    </location>
    <ligand>
        <name>Zn(2+)</name>
        <dbReference type="ChEBI" id="CHEBI:29105"/>
        <note>catalytic</note>
    </ligand>
</feature>
<feature type="binding site" evidence="1">
    <location>
        <position position="669"/>
    </location>
    <ligand>
        <name>Zn(2+)</name>
        <dbReference type="ChEBI" id="CHEBI:29105"/>
        <note>catalytic</note>
    </ligand>
</feature>
<feature type="binding site" evidence="1">
    <location>
        <position position="730"/>
    </location>
    <ligand>
        <name>Zn(2+)</name>
        <dbReference type="ChEBI" id="CHEBI:29105"/>
        <note>catalytic</note>
    </ligand>
</feature>
<name>METE_COXBN</name>
<sequence>MVYAHNLGFPRIGIKREMKKTVEAYWRGEISQQQLQQQAIELQLTNWKIQAEAGVDLIPVGDFSWYDHVLDMAVRVGAIPSRFKALNSNITDTMFCMARGQAPNGIETSACEMTKWFDTNYHYIVPEFTTNQSFELHHDDLFKSTKLALENNYRAKPVILGPLSFLWLGKCKGESFNKLLLLEKLLPVYAEIFEQLSSLGVEWVQVDEPILVLDLPPEWQQAFLTTYQQLNFFNLKCLLATYFGSLDDNLSLTCQLPVDGLHIDYCRAPDQLDSVLSQLPAEKILSVGIIDGRNIWCNDLNRSLTLLENIQSSLGDRLWVAPSCSLLHVPIDLDQENKLDVELKSWFAFAKQKVAEAAFLTRGLREGRESIGAELKKNEEVIISRKTSKRIHNPNVEKKAASVTERLMRRQHEHSIRKNKQTAQLNLPLFPTTTIGSFPQTSQIRCLRRDYKQGKIDDALYEEKIRQEIAEVIGIQVKLGLDVLVHGEPERNDMVEYFGELLDGIAITSNGWVQSYGSRCVKPPIIFGDVSRERPMTLRWIEYAQSLTTKSVKGMLTGPVTILAWSFVRDDQPRSQTAKQIALALRDEVQDLERSGVRVIQIDEPAFRECLPLRKAAWQDYLEWAVKCFRLASCGVKDETQIHTHMCYSEFNDIIEAIAALDADVITIESSRSEMEILKSFEKFAYPNDIGPGIYDIHSPRIPRVAEIEELAVRALQYIPIERLWINPDCGLKTRNWEETKEALSRMVDAAKHLRKAFSSEKTPTIDLELQPAST</sequence>
<gene>
    <name evidence="1" type="primary">metE</name>
    <name type="ordered locus">CBUD_2144</name>
</gene>
<accession>A9KDA0</accession>
<organism>
    <name type="scientific">Coxiella burnetii (strain Dugway 5J108-111)</name>
    <dbReference type="NCBI Taxonomy" id="434922"/>
    <lineage>
        <taxon>Bacteria</taxon>
        <taxon>Pseudomonadati</taxon>
        <taxon>Pseudomonadota</taxon>
        <taxon>Gammaproteobacteria</taxon>
        <taxon>Legionellales</taxon>
        <taxon>Coxiellaceae</taxon>
        <taxon>Coxiella</taxon>
    </lineage>
</organism>
<evidence type="ECO:0000255" key="1">
    <source>
        <dbReference type="HAMAP-Rule" id="MF_00172"/>
    </source>
</evidence>
<reference key="1">
    <citation type="journal article" date="2009" name="Infect. Immun.">
        <title>Comparative genomics reveal extensive transposon-mediated genomic plasticity and diversity among potential effector proteins within the genus Coxiella.</title>
        <authorList>
            <person name="Beare P.A."/>
            <person name="Unsworth N."/>
            <person name="Andoh M."/>
            <person name="Voth D.E."/>
            <person name="Omsland A."/>
            <person name="Gilk S.D."/>
            <person name="Williams K.P."/>
            <person name="Sobral B.W."/>
            <person name="Kupko J.J. III"/>
            <person name="Porcella S.F."/>
            <person name="Samuel J.E."/>
            <person name="Heinzen R.A."/>
        </authorList>
    </citation>
    <scope>NUCLEOTIDE SEQUENCE [LARGE SCALE GENOMIC DNA]</scope>
    <source>
        <strain>Dugway 5J108-111</strain>
    </source>
</reference>
<comment type="function">
    <text evidence="1">Catalyzes the transfer of a methyl group from 5-methyltetrahydrofolate to homocysteine resulting in methionine formation.</text>
</comment>
<comment type="catalytic activity">
    <reaction evidence="1">
        <text>5-methyltetrahydropteroyltri-L-glutamate + L-homocysteine = tetrahydropteroyltri-L-glutamate + L-methionine</text>
        <dbReference type="Rhea" id="RHEA:21196"/>
        <dbReference type="ChEBI" id="CHEBI:57844"/>
        <dbReference type="ChEBI" id="CHEBI:58140"/>
        <dbReference type="ChEBI" id="CHEBI:58199"/>
        <dbReference type="ChEBI" id="CHEBI:58207"/>
        <dbReference type="EC" id="2.1.1.14"/>
    </reaction>
</comment>
<comment type="cofactor">
    <cofactor evidence="1">
        <name>Zn(2+)</name>
        <dbReference type="ChEBI" id="CHEBI:29105"/>
    </cofactor>
    <text evidence="1">Binds 1 zinc ion per subunit.</text>
</comment>
<comment type="pathway">
    <text evidence="1">Amino-acid biosynthesis; L-methionine biosynthesis via de novo pathway; L-methionine from L-homocysteine (MetE route): step 1/1.</text>
</comment>
<comment type="similarity">
    <text evidence="1">Belongs to the vitamin-B12 independent methionine synthase family.</text>
</comment>
<proteinExistence type="inferred from homology"/>
<keyword id="KW-0028">Amino-acid biosynthesis</keyword>
<keyword id="KW-0479">Metal-binding</keyword>
<keyword id="KW-0486">Methionine biosynthesis</keyword>
<keyword id="KW-0489">Methyltransferase</keyword>
<keyword id="KW-0677">Repeat</keyword>
<keyword id="KW-0808">Transferase</keyword>
<keyword id="KW-0862">Zinc</keyword>
<protein>
    <recommendedName>
        <fullName evidence="1">5-methyltetrahydropteroyltriglutamate--homocysteine methyltransferase</fullName>
        <ecNumber evidence="1">2.1.1.14</ecNumber>
    </recommendedName>
    <alternativeName>
        <fullName evidence="1">Cobalamin-independent methionine synthase</fullName>
    </alternativeName>
    <alternativeName>
        <fullName evidence="1">Methionine synthase, vitamin-B12 independent isozyme</fullName>
    </alternativeName>
</protein>
<dbReference type="EC" id="2.1.1.14" evidence="1"/>
<dbReference type="EMBL" id="CP000733">
    <property type="protein sequence ID" value="ABS76984.1"/>
    <property type="molecule type" value="Genomic_DNA"/>
</dbReference>
<dbReference type="RefSeq" id="WP_005772138.1">
    <property type="nucleotide sequence ID" value="NC_009727.1"/>
</dbReference>
<dbReference type="SMR" id="A9KDA0"/>
<dbReference type="KEGG" id="cbd:CBUD_2144"/>
<dbReference type="HOGENOM" id="CLU_013175_0_0_6"/>
<dbReference type="UniPathway" id="UPA00051">
    <property type="reaction ID" value="UER00082"/>
</dbReference>
<dbReference type="Proteomes" id="UP000008555">
    <property type="component" value="Chromosome"/>
</dbReference>
<dbReference type="GO" id="GO:0003871">
    <property type="term" value="F:5-methyltetrahydropteroyltriglutamate-homocysteine S-methyltransferase activity"/>
    <property type="evidence" value="ECO:0007669"/>
    <property type="project" value="UniProtKB-UniRule"/>
</dbReference>
<dbReference type="GO" id="GO:0008270">
    <property type="term" value="F:zinc ion binding"/>
    <property type="evidence" value="ECO:0007669"/>
    <property type="project" value="InterPro"/>
</dbReference>
<dbReference type="GO" id="GO:0009086">
    <property type="term" value="P:methionine biosynthetic process"/>
    <property type="evidence" value="ECO:0007669"/>
    <property type="project" value="UniProtKB-UniRule"/>
</dbReference>
<dbReference type="GO" id="GO:0032259">
    <property type="term" value="P:methylation"/>
    <property type="evidence" value="ECO:0007669"/>
    <property type="project" value="UniProtKB-KW"/>
</dbReference>
<dbReference type="CDD" id="cd03311">
    <property type="entry name" value="CIMS_C_terminal_like"/>
    <property type="match status" value="1"/>
</dbReference>
<dbReference type="CDD" id="cd03312">
    <property type="entry name" value="CIMS_N_terminal_like"/>
    <property type="match status" value="1"/>
</dbReference>
<dbReference type="FunFam" id="3.20.20.210:FF:000002">
    <property type="entry name" value="5-methyltetrahydropteroyltriglutamate--homocysteine methyltransferase"/>
    <property type="match status" value="1"/>
</dbReference>
<dbReference type="FunFam" id="3.20.20.210:FF:000003">
    <property type="entry name" value="5-methyltetrahydropteroyltriglutamate--homocysteine methyltransferase"/>
    <property type="match status" value="1"/>
</dbReference>
<dbReference type="Gene3D" id="3.20.20.210">
    <property type="match status" value="2"/>
</dbReference>
<dbReference type="HAMAP" id="MF_00172">
    <property type="entry name" value="Meth_synth"/>
    <property type="match status" value="1"/>
</dbReference>
<dbReference type="InterPro" id="IPR013215">
    <property type="entry name" value="Cbl-indep_Met_Synth_N"/>
</dbReference>
<dbReference type="InterPro" id="IPR006276">
    <property type="entry name" value="Cobalamin-indep_Met_synthase"/>
</dbReference>
<dbReference type="InterPro" id="IPR002629">
    <property type="entry name" value="Met_Synth_C/arc"/>
</dbReference>
<dbReference type="InterPro" id="IPR038071">
    <property type="entry name" value="UROD/MetE-like_sf"/>
</dbReference>
<dbReference type="NCBIfam" id="TIGR01371">
    <property type="entry name" value="met_syn_B12ind"/>
    <property type="match status" value="1"/>
</dbReference>
<dbReference type="NCBIfam" id="NF003556">
    <property type="entry name" value="PRK05222.1"/>
    <property type="match status" value="1"/>
</dbReference>
<dbReference type="PANTHER" id="PTHR30519">
    <property type="entry name" value="5-METHYLTETRAHYDROPTEROYLTRIGLUTAMATE--HOMOCYSTEINE METHYLTRANSFERASE"/>
    <property type="match status" value="1"/>
</dbReference>
<dbReference type="Pfam" id="PF08267">
    <property type="entry name" value="Meth_synt_1"/>
    <property type="match status" value="1"/>
</dbReference>
<dbReference type="Pfam" id="PF01717">
    <property type="entry name" value="Meth_synt_2"/>
    <property type="match status" value="1"/>
</dbReference>
<dbReference type="PIRSF" id="PIRSF000382">
    <property type="entry name" value="MeTrfase_B12_ind"/>
    <property type="match status" value="1"/>
</dbReference>
<dbReference type="SUPFAM" id="SSF51726">
    <property type="entry name" value="UROD/MetE-like"/>
    <property type="match status" value="2"/>
</dbReference>